<sequence>MSQLMGIITRLQSLQETAEAANEPMQRYFEVNGEKICSVKYFEKNQTFELTVFQKGEKPNTYPFDNIDMVSIEIFELLQ</sequence>
<protein>
    <recommendedName>
        <fullName>Uncharacterized protein YkuJ</fullName>
    </recommendedName>
</protein>
<evidence type="ECO:0000255" key="1"/>
<evidence type="ECO:0007829" key="2">
    <source>
        <dbReference type="PDB" id="2FFG"/>
    </source>
</evidence>
<accession>O34588</accession>
<accession>Q796K4</accession>
<organism>
    <name type="scientific">Bacillus subtilis (strain 168)</name>
    <dbReference type="NCBI Taxonomy" id="224308"/>
    <lineage>
        <taxon>Bacteria</taxon>
        <taxon>Bacillati</taxon>
        <taxon>Bacillota</taxon>
        <taxon>Bacilli</taxon>
        <taxon>Bacillales</taxon>
        <taxon>Bacillaceae</taxon>
        <taxon>Bacillus</taxon>
    </lineage>
</organism>
<proteinExistence type="evidence at protein level"/>
<feature type="signal peptide" evidence="1">
    <location>
        <begin position="1"/>
        <end position="20"/>
    </location>
</feature>
<feature type="chain" id="PRO_0000360182" description="Uncharacterized protein YkuJ">
    <location>
        <begin position="21"/>
        <end position="79"/>
    </location>
</feature>
<feature type="helix" evidence="2">
    <location>
        <begin position="3"/>
        <end position="21"/>
    </location>
</feature>
<feature type="strand" evidence="2">
    <location>
        <begin position="25"/>
        <end position="31"/>
    </location>
</feature>
<feature type="strand" evidence="2">
    <location>
        <begin position="34"/>
        <end position="42"/>
    </location>
</feature>
<feature type="turn" evidence="2">
    <location>
        <begin position="43"/>
        <end position="46"/>
    </location>
</feature>
<feature type="strand" evidence="2">
    <location>
        <begin position="47"/>
        <end position="54"/>
    </location>
</feature>
<feature type="strand" evidence="2">
    <location>
        <begin position="57"/>
        <end position="65"/>
    </location>
</feature>
<feature type="helix" evidence="2">
    <location>
        <begin position="67"/>
        <end position="79"/>
    </location>
</feature>
<reference key="1">
    <citation type="submission" date="1997-11" db="EMBL/GenBank/DDBJ databases">
        <title>Sequence of the Bacillus subtilis chromosome from ykuA to cse-15.</title>
        <authorList>
            <person name="Scanlan E."/>
            <person name="Devine K.M."/>
        </authorList>
    </citation>
    <scope>NUCLEOTIDE SEQUENCE [GENOMIC DNA]</scope>
    <source>
        <strain>168</strain>
    </source>
</reference>
<reference key="2">
    <citation type="journal article" date="1997" name="Nature">
        <title>The complete genome sequence of the Gram-positive bacterium Bacillus subtilis.</title>
        <authorList>
            <person name="Kunst F."/>
            <person name="Ogasawara N."/>
            <person name="Moszer I."/>
            <person name="Albertini A.M."/>
            <person name="Alloni G."/>
            <person name="Azevedo V."/>
            <person name="Bertero M.G."/>
            <person name="Bessieres P."/>
            <person name="Bolotin A."/>
            <person name="Borchert S."/>
            <person name="Borriss R."/>
            <person name="Boursier L."/>
            <person name="Brans A."/>
            <person name="Braun M."/>
            <person name="Brignell S.C."/>
            <person name="Bron S."/>
            <person name="Brouillet S."/>
            <person name="Bruschi C.V."/>
            <person name="Caldwell B."/>
            <person name="Capuano V."/>
            <person name="Carter N.M."/>
            <person name="Choi S.-K."/>
            <person name="Codani J.-J."/>
            <person name="Connerton I.F."/>
            <person name="Cummings N.J."/>
            <person name="Daniel R.A."/>
            <person name="Denizot F."/>
            <person name="Devine K.M."/>
            <person name="Duesterhoeft A."/>
            <person name="Ehrlich S.D."/>
            <person name="Emmerson P.T."/>
            <person name="Entian K.-D."/>
            <person name="Errington J."/>
            <person name="Fabret C."/>
            <person name="Ferrari E."/>
            <person name="Foulger D."/>
            <person name="Fritz C."/>
            <person name="Fujita M."/>
            <person name="Fujita Y."/>
            <person name="Fuma S."/>
            <person name="Galizzi A."/>
            <person name="Galleron N."/>
            <person name="Ghim S.-Y."/>
            <person name="Glaser P."/>
            <person name="Goffeau A."/>
            <person name="Golightly E.J."/>
            <person name="Grandi G."/>
            <person name="Guiseppi G."/>
            <person name="Guy B.J."/>
            <person name="Haga K."/>
            <person name="Haiech J."/>
            <person name="Harwood C.R."/>
            <person name="Henaut A."/>
            <person name="Hilbert H."/>
            <person name="Holsappel S."/>
            <person name="Hosono S."/>
            <person name="Hullo M.-F."/>
            <person name="Itaya M."/>
            <person name="Jones L.-M."/>
            <person name="Joris B."/>
            <person name="Karamata D."/>
            <person name="Kasahara Y."/>
            <person name="Klaerr-Blanchard M."/>
            <person name="Klein C."/>
            <person name="Kobayashi Y."/>
            <person name="Koetter P."/>
            <person name="Koningstein G."/>
            <person name="Krogh S."/>
            <person name="Kumano M."/>
            <person name="Kurita K."/>
            <person name="Lapidus A."/>
            <person name="Lardinois S."/>
            <person name="Lauber J."/>
            <person name="Lazarevic V."/>
            <person name="Lee S.-M."/>
            <person name="Levine A."/>
            <person name="Liu H."/>
            <person name="Masuda S."/>
            <person name="Mauel C."/>
            <person name="Medigue C."/>
            <person name="Medina N."/>
            <person name="Mellado R.P."/>
            <person name="Mizuno M."/>
            <person name="Moestl D."/>
            <person name="Nakai S."/>
            <person name="Noback M."/>
            <person name="Noone D."/>
            <person name="O'Reilly M."/>
            <person name="Ogawa K."/>
            <person name="Ogiwara A."/>
            <person name="Oudega B."/>
            <person name="Park S.-H."/>
            <person name="Parro V."/>
            <person name="Pohl T.M."/>
            <person name="Portetelle D."/>
            <person name="Porwollik S."/>
            <person name="Prescott A.M."/>
            <person name="Presecan E."/>
            <person name="Pujic P."/>
            <person name="Purnelle B."/>
            <person name="Rapoport G."/>
            <person name="Rey M."/>
            <person name="Reynolds S."/>
            <person name="Rieger M."/>
            <person name="Rivolta C."/>
            <person name="Rocha E."/>
            <person name="Roche B."/>
            <person name="Rose M."/>
            <person name="Sadaie Y."/>
            <person name="Sato T."/>
            <person name="Scanlan E."/>
            <person name="Schleich S."/>
            <person name="Schroeter R."/>
            <person name="Scoffone F."/>
            <person name="Sekiguchi J."/>
            <person name="Sekowska A."/>
            <person name="Seror S.J."/>
            <person name="Serror P."/>
            <person name="Shin B.-S."/>
            <person name="Soldo B."/>
            <person name="Sorokin A."/>
            <person name="Tacconi E."/>
            <person name="Takagi T."/>
            <person name="Takahashi H."/>
            <person name="Takemaru K."/>
            <person name="Takeuchi M."/>
            <person name="Tamakoshi A."/>
            <person name="Tanaka T."/>
            <person name="Terpstra P."/>
            <person name="Tognoni A."/>
            <person name="Tosato V."/>
            <person name="Uchiyama S."/>
            <person name="Vandenbol M."/>
            <person name="Vannier F."/>
            <person name="Vassarotti A."/>
            <person name="Viari A."/>
            <person name="Wambutt R."/>
            <person name="Wedler E."/>
            <person name="Wedler H."/>
            <person name="Weitzenegger T."/>
            <person name="Winters P."/>
            <person name="Wipat A."/>
            <person name="Yamamoto H."/>
            <person name="Yamane K."/>
            <person name="Yasumoto K."/>
            <person name="Yata K."/>
            <person name="Yoshida K."/>
            <person name="Yoshikawa H.-F."/>
            <person name="Zumstein E."/>
            <person name="Yoshikawa H."/>
            <person name="Danchin A."/>
        </authorList>
    </citation>
    <scope>NUCLEOTIDE SEQUENCE [LARGE SCALE GENOMIC DNA]</scope>
    <source>
        <strain>168</strain>
    </source>
</reference>
<reference key="3">
    <citation type="submission" date="2006-04" db="PDB data bank">
        <title>Novel x-ray structure of the ykuj protein from Bacillus subtilis. Northeast structural genomics target sr360.</title>
        <authorList>
            <consortium name="Northeast structural genomics consortium (NESG)"/>
        </authorList>
    </citation>
    <scope>X-RAY CRYSTALLOGRAPHY (2.31 ANGSTROMS)</scope>
</reference>
<gene>
    <name type="primary">ykuJ</name>
    <name type="ordered locus">BSU14100</name>
</gene>
<keyword id="KW-0002">3D-structure</keyword>
<keyword id="KW-1185">Reference proteome</keyword>
<keyword id="KW-0732">Signal</keyword>
<dbReference type="EMBL" id="AJ222587">
    <property type="protein sequence ID" value="CAA10873.1"/>
    <property type="molecule type" value="Genomic_DNA"/>
</dbReference>
<dbReference type="EMBL" id="AL009126">
    <property type="protein sequence ID" value="CAB13283.1"/>
    <property type="molecule type" value="Genomic_DNA"/>
</dbReference>
<dbReference type="PIR" id="G69865">
    <property type="entry name" value="G69865"/>
</dbReference>
<dbReference type="RefSeq" id="NP_389293.1">
    <property type="nucleotide sequence ID" value="NC_000964.3"/>
</dbReference>
<dbReference type="RefSeq" id="WP_003218671.1">
    <property type="nucleotide sequence ID" value="NZ_OZ025638.1"/>
</dbReference>
<dbReference type="PDB" id="2FFG">
    <property type="method" value="X-ray"/>
    <property type="resolution" value="2.31 A"/>
    <property type="chains" value="A/B=1-79"/>
</dbReference>
<dbReference type="PDBsum" id="2FFG"/>
<dbReference type="BMRB" id="O34588"/>
<dbReference type="SMR" id="O34588"/>
<dbReference type="FunCoup" id="O34588">
    <property type="interactions" value="22"/>
</dbReference>
<dbReference type="STRING" id="224308.BSU14100"/>
<dbReference type="jPOST" id="O34588"/>
<dbReference type="PaxDb" id="224308-BSU14100"/>
<dbReference type="DNASU" id="936162"/>
<dbReference type="EnsemblBacteria" id="CAB13283">
    <property type="protein sequence ID" value="CAB13283"/>
    <property type="gene ID" value="BSU_14100"/>
</dbReference>
<dbReference type="GeneID" id="936162"/>
<dbReference type="KEGG" id="bsu:BSU14100"/>
<dbReference type="PATRIC" id="fig|224308.179.peg.1539"/>
<dbReference type="eggNOG" id="COG4703">
    <property type="taxonomic scope" value="Bacteria"/>
</dbReference>
<dbReference type="InParanoid" id="O34588"/>
<dbReference type="OrthoDB" id="2361638at2"/>
<dbReference type="PhylomeDB" id="O34588"/>
<dbReference type="BioCyc" id="BSUB:BSU14100-MONOMER"/>
<dbReference type="EvolutionaryTrace" id="O34588"/>
<dbReference type="PRO" id="PR:O34588"/>
<dbReference type="Proteomes" id="UP000001570">
    <property type="component" value="Chromosome"/>
</dbReference>
<dbReference type="Gene3D" id="3.30.720.20">
    <property type="entry name" value="Protein of unknown function DUF1797"/>
    <property type="match status" value="1"/>
</dbReference>
<dbReference type="InterPro" id="IPR014904">
    <property type="entry name" value="YkuJ-like"/>
</dbReference>
<dbReference type="InterPro" id="IPR038073">
    <property type="entry name" value="YkuJ-like_sf"/>
</dbReference>
<dbReference type="Pfam" id="PF08796">
    <property type="entry name" value="DUF1797"/>
    <property type="match status" value="1"/>
</dbReference>
<dbReference type="PIRSF" id="PIRSF037356">
    <property type="entry name" value="DUF1797"/>
    <property type="match status" value="1"/>
</dbReference>
<dbReference type="SUPFAM" id="SSF143567">
    <property type="entry name" value="YkuJ-like"/>
    <property type="match status" value="1"/>
</dbReference>
<name>YKUJ_BACSU</name>